<sequence>MQIWVDADACPNVIKEVLFRAADRTGMMVTLVANQPLKTPPSKFIRTVQVASGFDVADNEIVQRVEKNDLVITADIPLAAEVIEKGGIALNPRGERYTPDTIRERLNMRDFMDTMRASGIQTGGPNTLNQRDRQQFANELDKWLQQARNQAK</sequence>
<reference key="1">
    <citation type="journal article" date="2006" name="J. Bacteriol.">
        <title>Complete genome sequence of Yersinia pestis strains Antiqua and Nepal516: evidence of gene reduction in an emerging pathogen.</title>
        <authorList>
            <person name="Chain P.S.G."/>
            <person name="Hu P."/>
            <person name="Malfatti S.A."/>
            <person name="Radnedge L."/>
            <person name="Larimer F."/>
            <person name="Vergez L.M."/>
            <person name="Worsham P."/>
            <person name="Chu M.C."/>
            <person name="Andersen G.L."/>
        </authorList>
    </citation>
    <scope>NUCLEOTIDE SEQUENCE [LARGE SCALE GENOMIC DNA]</scope>
    <source>
        <strain>Nepal516</strain>
    </source>
</reference>
<reference key="2">
    <citation type="submission" date="2009-04" db="EMBL/GenBank/DDBJ databases">
        <title>Yersinia pestis Nepal516A whole genome shotgun sequencing project.</title>
        <authorList>
            <person name="Plunkett G. III"/>
            <person name="Anderson B.D."/>
            <person name="Baumler D.J."/>
            <person name="Burland V."/>
            <person name="Cabot E.L."/>
            <person name="Glasner J.D."/>
            <person name="Mau B."/>
            <person name="Neeno-Eckwall E."/>
            <person name="Perna N.T."/>
            <person name="Munk A.C."/>
            <person name="Tapia R."/>
            <person name="Green L.D."/>
            <person name="Rogers Y.C."/>
            <person name="Detter J.C."/>
            <person name="Bruce D.C."/>
            <person name="Brettin T.S."/>
        </authorList>
    </citation>
    <scope>NUCLEOTIDE SEQUENCE [LARGE SCALE GENOMIC DNA]</scope>
    <source>
        <strain>Nepal516</strain>
    </source>
</reference>
<protein>
    <recommendedName>
        <fullName evidence="1">UPF0178 protein YPN_1352</fullName>
    </recommendedName>
</protein>
<accession>Q1CJZ8</accession>
<accession>C4GRW2</accession>
<organism>
    <name type="scientific">Yersinia pestis bv. Antiqua (strain Nepal516)</name>
    <dbReference type="NCBI Taxonomy" id="377628"/>
    <lineage>
        <taxon>Bacteria</taxon>
        <taxon>Pseudomonadati</taxon>
        <taxon>Pseudomonadota</taxon>
        <taxon>Gammaproteobacteria</taxon>
        <taxon>Enterobacterales</taxon>
        <taxon>Yersiniaceae</taxon>
        <taxon>Yersinia</taxon>
    </lineage>
</organism>
<gene>
    <name type="ordered locus">YPN_1352</name>
    <name type="ORF">YP516_1490</name>
</gene>
<dbReference type="EMBL" id="CP000305">
    <property type="protein sequence ID" value="ABG17682.1"/>
    <property type="molecule type" value="Genomic_DNA"/>
</dbReference>
<dbReference type="EMBL" id="ACNQ01000008">
    <property type="protein sequence ID" value="EEO77803.1"/>
    <property type="molecule type" value="Genomic_DNA"/>
</dbReference>
<dbReference type="RefSeq" id="WP_002208527.1">
    <property type="nucleotide sequence ID" value="NZ_ACNQ01000008.1"/>
</dbReference>
<dbReference type="KEGG" id="ypn:YPN_1352"/>
<dbReference type="HOGENOM" id="CLU_106619_1_0_6"/>
<dbReference type="Proteomes" id="UP000008936">
    <property type="component" value="Chromosome"/>
</dbReference>
<dbReference type="CDD" id="cd18720">
    <property type="entry name" value="PIN_YqxD-like"/>
    <property type="match status" value="1"/>
</dbReference>
<dbReference type="HAMAP" id="MF_00489">
    <property type="entry name" value="UPF0178"/>
    <property type="match status" value="1"/>
</dbReference>
<dbReference type="InterPro" id="IPR003791">
    <property type="entry name" value="UPF0178"/>
</dbReference>
<dbReference type="NCBIfam" id="NF001095">
    <property type="entry name" value="PRK00124.1"/>
    <property type="match status" value="1"/>
</dbReference>
<dbReference type="PANTHER" id="PTHR35146">
    <property type="entry name" value="UPF0178 PROTEIN YAII"/>
    <property type="match status" value="1"/>
</dbReference>
<dbReference type="PANTHER" id="PTHR35146:SF1">
    <property type="entry name" value="UPF0178 PROTEIN YAII"/>
    <property type="match status" value="1"/>
</dbReference>
<dbReference type="Pfam" id="PF02639">
    <property type="entry name" value="DUF188"/>
    <property type="match status" value="1"/>
</dbReference>
<name>Y1352_YERPN</name>
<evidence type="ECO:0000255" key="1">
    <source>
        <dbReference type="HAMAP-Rule" id="MF_00489"/>
    </source>
</evidence>
<proteinExistence type="inferred from homology"/>
<comment type="similarity">
    <text evidence="1">Belongs to the UPF0178 family.</text>
</comment>
<feature type="chain" id="PRO_1000014457" description="UPF0178 protein YPN_1352">
    <location>
        <begin position="1"/>
        <end position="152"/>
    </location>
</feature>